<accession>B3GZH2</accession>
<comment type="catalytic activity">
    <reaction evidence="1">
        <text>1-(5-phospho-beta-D-ribosyl)-5-[(5-phospho-beta-D-ribosylamino)methylideneamino]imidazole-4-carboxamide = 5-[(5-phospho-1-deoxy-D-ribulos-1-ylimino)methylamino]-1-(5-phospho-beta-D-ribosyl)imidazole-4-carboxamide</text>
        <dbReference type="Rhea" id="RHEA:15469"/>
        <dbReference type="ChEBI" id="CHEBI:58435"/>
        <dbReference type="ChEBI" id="CHEBI:58525"/>
        <dbReference type="EC" id="5.3.1.16"/>
    </reaction>
</comment>
<comment type="pathway">
    <text evidence="1">Amino-acid biosynthesis; L-histidine biosynthesis; L-histidine from 5-phospho-alpha-D-ribose 1-diphosphate: step 4/9.</text>
</comment>
<comment type="subcellular location">
    <subcellularLocation>
        <location evidence="1">Cytoplasm</location>
    </subcellularLocation>
</comment>
<comment type="similarity">
    <text evidence="1">Belongs to the HisA/HisF family.</text>
</comment>
<dbReference type="EC" id="5.3.1.16" evidence="1"/>
<dbReference type="EMBL" id="CP001091">
    <property type="protein sequence ID" value="ACE62765.1"/>
    <property type="molecule type" value="Genomic_DNA"/>
</dbReference>
<dbReference type="RefSeq" id="WP_005618465.1">
    <property type="nucleotide sequence ID" value="NC_010939.1"/>
</dbReference>
<dbReference type="SMR" id="B3GZH2"/>
<dbReference type="KEGG" id="apa:APP7_2113"/>
<dbReference type="HOGENOM" id="CLU_048577_1_2_6"/>
<dbReference type="UniPathway" id="UPA00031">
    <property type="reaction ID" value="UER00009"/>
</dbReference>
<dbReference type="Proteomes" id="UP000001226">
    <property type="component" value="Chromosome"/>
</dbReference>
<dbReference type="GO" id="GO:0005737">
    <property type="term" value="C:cytoplasm"/>
    <property type="evidence" value="ECO:0007669"/>
    <property type="project" value="UniProtKB-SubCell"/>
</dbReference>
<dbReference type="GO" id="GO:0003949">
    <property type="term" value="F:1-(5-phosphoribosyl)-5-[(5-phosphoribosylamino)methylideneamino]imidazole-4-carboxamide isomerase activity"/>
    <property type="evidence" value="ECO:0007669"/>
    <property type="project" value="UniProtKB-UniRule"/>
</dbReference>
<dbReference type="GO" id="GO:0000105">
    <property type="term" value="P:L-histidine biosynthetic process"/>
    <property type="evidence" value="ECO:0007669"/>
    <property type="project" value="UniProtKB-UniRule"/>
</dbReference>
<dbReference type="GO" id="GO:0000162">
    <property type="term" value="P:L-tryptophan biosynthetic process"/>
    <property type="evidence" value="ECO:0007669"/>
    <property type="project" value="TreeGrafter"/>
</dbReference>
<dbReference type="CDD" id="cd04732">
    <property type="entry name" value="HisA"/>
    <property type="match status" value="1"/>
</dbReference>
<dbReference type="FunFam" id="3.20.20.70:FF:000009">
    <property type="entry name" value="1-(5-phosphoribosyl)-5-[(5-phosphoribosylamino)methylideneamino] imidazole-4-carboxamide isomerase"/>
    <property type="match status" value="1"/>
</dbReference>
<dbReference type="Gene3D" id="3.20.20.70">
    <property type="entry name" value="Aldolase class I"/>
    <property type="match status" value="1"/>
</dbReference>
<dbReference type="HAMAP" id="MF_01014">
    <property type="entry name" value="HisA"/>
    <property type="match status" value="1"/>
</dbReference>
<dbReference type="InterPro" id="IPR013785">
    <property type="entry name" value="Aldolase_TIM"/>
</dbReference>
<dbReference type="InterPro" id="IPR006062">
    <property type="entry name" value="His_biosynth"/>
</dbReference>
<dbReference type="InterPro" id="IPR006063">
    <property type="entry name" value="HisA_bact_arch"/>
</dbReference>
<dbReference type="InterPro" id="IPR044524">
    <property type="entry name" value="Isoase_HisA-like"/>
</dbReference>
<dbReference type="InterPro" id="IPR023016">
    <property type="entry name" value="Isoase_HisA-like_bact"/>
</dbReference>
<dbReference type="InterPro" id="IPR011060">
    <property type="entry name" value="RibuloseP-bd_barrel"/>
</dbReference>
<dbReference type="NCBIfam" id="TIGR00007">
    <property type="entry name" value="1-(5-phosphoribosyl)-5-[(5-phosphoribosylamino)methylideneamino]imidazole-4-carboxamide isomerase"/>
    <property type="match status" value="1"/>
</dbReference>
<dbReference type="PANTHER" id="PTHR43090">
    <property type="entry name" value="1-(5-PHOSPHORIBOSYL)-5-[(5-PHOSPHORIBOSYLAMINO)METHYLIDENEAMINO] IMIDAZOLE-4-CARBOXAMIDE ISOMERASE"/>
    <property type="match status" value="1"/>
</dbReference>
<dbReference type="PANTHER" id="PTHR43090:SF2">
    <property type="entry name" value="1-(5-PHOSPHORIBOSYL)-5-[(5-PHOSPHORIBOSYLAMINO)METHYLIDENEAMINO] IMIDAZOLE-4-CARBOXAMIDE ISOMERASE"/>
    <property type="match status" value="1"/>
</dbReference>
<dbReference type="Pfam" id="PF00977">
    <property type="entry name" value="His_biosynth"/>
    <property type="match status" value="1"/>
</dbReference>
<dbReference type="SUPFAM" id="SSF51366">
    <property type="entry name" value="Ribulose-phoshate binding barrel"/>
    <property type="match status" value="1"/>
</dbReference>
<feature type="chain" id="PRO_1000135072" description="1-(5-phosphoribosyl)-5-[(5-phosphoribosylamino)methylideneamino] imidazole-4-carboxamide isomerase">
    <location>
        <begin position="1"/>
        <end position="250"/>
    </location>
</feature>
<feature type="active site" description="Proton acceptor" evidence="1">
    <location>
        <position position="12"/>
    </location>
</feature>
<feature type="active site" description="Proton donor" evidence="1">
    <location>
        <position position="134"/>
    </location>
</feature>
<name>HIS4_ACTP7</name>
<keyword id="KW-0028">Amino-acid biosynthesis</keyword>
<keyword id="KW-0963">Cytoplasm</keyword>
<keyword id="KW-0368">Histidine biosynthesis</keyword>
<keyword id="KW-0413">Isomerase</keyword>
<sequence length="250" mass="26815">MQKKSIIIPALDLIDGNVVRLHQGDYAKQTTYSDNPIEQFASYLAQGAEQLHLVDLTGAKDPAKRQTALIGKIIAETNCQIQVGGGIRTEQDVADLLAVGANRVVIGSTAVKDRAMVKGWFEKYGAEKFVLALDVNIDASGQKIIAISGWQEASGVSLEELIEDYQVVGLQHVLCTDISRDGTLAGSNVNLYREICAKYPKIHFQSSGGIGSLDDIKALKGTGVSGVIVGRALLEGKFNVAEAIECWQNG</sequence>
<proteinExistence type="inferred from homology"/>
<reference key="1">
    <citation type="submission" date="2008-06" db="EMBL/GenBank/DDBJ databases">
        <title>Genome and proteome analysis of A. pleuropneumoniae serotype 7.</title>
        <authorList>
            <person name="Linke B."/>
            <person name="Buettner F."/>
            <person name="Martinez-Arias R."/>
            <person name="Goesmann A."/>
            <person name="Baltes N."/>
            <person name="Tegetmeyer H."/>
            <person name="Singh M."/>
            <person name="Gerlach G.F."/>
        </authorList>
    </citation>
    <scope>NUCLEOTIDE SEQUENCE [LARGE SCALE GENOMIC DNA]</scope>
    <source>
        <strain>AP76</strain>
    </source>
</reference>
<organism>
    <name type="scientific">Actinobacillus pleuropneumoniae serotype 7 (strain AP76)</name>
    <dbReference type="NCBI Taxonomy" id="537457"/>
    <lineage>
        <taxon>Bacteria</taxon>
        <taxon>Pseudomonadati</taxon>
        <taxon>Pseudomonadota</taxon>
        <taxon>Gammaproteobacteria</taxon>
        <taxon>Pasteurellales</taxon>
        <taxon>Pasteurellaceae</taxon>
        <taxon>Actinobacillus</taxon>
    </lineage>
</organism>
<gene>
    <name evidence="1" type="primary">hisA</name>
    <name type="ordered locus">APP7_2113</name>
</gene>
<evidence type="ECO:0000255" key="1">
    <source>
        <dbReference type="HAMAP-Rule" id="MF_01014"/>
    </source>
</evidence>
<protein>
    <recommendedName>
        <fullName evidence="1">1-(5-phosphoribosyl)-5-[(5-phosphoribosylamino)methylideneamino] imidazole-4-carboxamide isomerase</fullName>
        <ecNumber evidence="1">5.3.1.16</ecNumber>
    </recommendedName>
    <alternativeName>
        <fullName evidence="1">Phosphoribosylformimino-5-aminoimidazole carboxamide ribotide isomerase</fullName>
    </alternativeName>
</protein>